<comment type="function">
    <text evidence="1">Participates in the translocation of transit peptide-containing proteins across the mitochondrial inner membrane. Also required for assembly of mitochondrial respiratory chain complex I and complex IV as component of the MITRAC (mitochondrial translation regulation assembly intermediate of cytochrome c oxidase complex) complex. Probably shuttles between the presequence translocase and respiratory-chain assembly intermediates in a process that promotes incorporation of early nuclear-encoded subunits into these complexes.</text>
</comment>
<comment type="subunit">
    <text evidence="1">Component of the TIM23 complex. Component of the MITRAC (mitochondrial translation regulation assembly intermediate of cytochrome c oxidase complex) complex, the core components of this complex being COA3/MITRAC12 and COX14. Interacts with COA3 and MT-CO1/COX1.</text>
</comment>
<comment type="subcellular location">
    <subcellularLocation>
        <location evidence="4">Mitochondrion membrane</location>
        <topology evidence="4">Single-pass membrane protein</topology>
    </subcellularLocation>
</comment>
<comment type="alternative products">
    <event type="alternative splicing"/>
    <isoform>
        <id>Q8CCM6-2</id>
        <name>1</name>
        <sequence type="displayed"/>
    </isoform>
    <isoform>
        <id>Q8CCM6-3</id>
        <name>2</name>
        <sequence type="described" ref="VSP_060547 VSP_060548"/>
    </isoform>
</comment>
<comment type="similarity">
    <text evidence="4">Belongs to the TIM21 family.</text>
</comment>
<comment type="sequence caution" evidence="4">
    <conflict type="miscellaneous discrepancy">
        <sequence resource="EMBL-CDS" id="BAC27885"/>
    </conflict>
    <text>Probable cloning artifact.</text>
</comment>
<proteinExistence type="evidence at protein level"/>
<accession>Q8CCM6</accession>
<accession>Q3THX0</accession>
<accession>Q8CE44</accession>
<accession>Q9CYU8</accession>
<accession>Q9CZS4</accession>
<dbReference type="EMBL" id="AK012203">
    <property type="protein sequence ID" value="BAB28097.1"/>
    <property type="molecule type" value="mRNA"/>
</dbReference>
<dbReference type="EMBL" id="AK013281">
    <property type="protein sequence ID" value="BAB28768.1"/>
    <property type="molecule type" value="mRNA"/>
</dbReference>
<dbReference type="EMBL" id="AK029037">
    <property type="protein sequence ID" value="BAC26258.1"/>
    <property type="molecule type" value="mRNA"/>
</dbReference>
<dbReference type="EMBL" id="AK032468">
    <property type="protein sequence ID" value="BAC27885.1"/>
    <property type="status" value="ALT_SEQ"/>
    <property type="molecule type" value="mRNA"/>
</dbReference>
<dbReference type="EMBL" id="AK168105">
    <property type="protein sequence ID" value="BAE40076.1"/>
    <property type="molecule type" value="mRNA"/>
</dbReference>
<dbReference type="EMBL" id="BC034297">
    <property type="protein sequence ID" value="AAH34297.1"/>
    <property type="molecule type" value="mRNA"/>
</dbReference>
<dbReference type="CCDS" id="CCDS29386.1">
    <molecule id="Q8CCM6-2"/>
</dbReference>
<dbReference type="RefSeq" id="NP_080245.1">
    <molecule id="Q8CCM6-2"/>
    <property type="nucleotide sequence ID" value="NM_025969.5"/>
</dbReference>
<dbReference type="RefSeq" id="XP_011245396.1">
    <property type="nucleotide sequence ID" value="XM_011247094.2"/>
</dbReference>
<dbReference type="SMR" id="Q8CCM6"/>
<dbReference type="BioGRID" id="211943">
    <property type="interactions" value="1"/>
</dbReference>
<dbReference type="FunCoup" id="Q8CCM6">
    <property type="interactions" value="2628"/>
</dbReference>
<dbReference type="STRING" id="10090.ENSMUSP00000025547"/>
<dbReference type="PhosphoSitePlus" id="Q8CCM6"/>
<dbReference type="SwissPalm" id="Q8CCM6"/>
<dbReference type="jPOST" id="Q8CCM6"/>
<dbReference type="PaxDb" id="10090-ENSMUSP00000025547"/>
<dbReference type="PeptideAtlas" id="Q8CCM6"/>
<dbReference type="ProteomicsDB" id="259390">
    <molecule id="Q8CCM6-2"/>
</dbReference>
<dbReference type="ProteomicsDB" id="259391">
    <molecule id="Q8CCM6-2"/>
</dbReference>
<dbReference type="ProteomicsDB" id="259392">
    <molecule id="Q8CCM6-3"/>
</dbReference>
<dbReference type="Pumba" id="Q8CCM6"/>
<dbReference type="Antibodypedia" id="2242">
    <property type="antibodies" value="46 antibodies from 17 providers"/>
</dbReference>
<dbReference type="DNASU" id="67105"/>
<dbReference type="Ensembl" id="ENSMUST00000025547.4">
    <molecule id="Q8CCM6-2"/>
    <property type="protein sequence ID" value="ENSMUSP00000025547.3"/>
    <property type="gene ID" value="ENSMUSG00000024645.6"/>
</dbReference>
<dbReference type="GeneID" id="67105"/>
<dbReference type="KEGG" id="mmu:67105"/>
<dbReference type="AGR" id="MGI:1920595"/>
<dbReference type="CTD" id="29090"/>
<dbReference type="MGI" id="MGI:1920595">
    <property type="gene designation" value="Timm21"/>
</dbReference>
<dbReference type="VEuPathDB" id="HostDB:ENSMUSG00000024645"/>
<dbReference type="eggNOG" id="KOG4836">
    <property type="taxonomic scope" value="Eukaryota"/>
</dbReference>
<dbReference type="GeneTree" id="ENSGT00390000011552"/>
<dbReference type="HOGENOM" id="CLU_099476_0_0_1"/>
<dbReference type="InParanoid" id="Q8CCM6"/>
<dbReference type="OMA" id="HFHVEGP"/>
<dbReference type="OrthoDB" id="436405at2759"/>
<dbReference type="PhylomeDB" id="Q8CCM6"/>
<dbReference type="TreeFam" id="TF315067"/>
<dbReference type="Reactome" id="R-MMU-9864848">
    <property type="pathway name" value="Complex IV assembly"/>
</dbReference>
<dbReference type="BioGRID-ORCS" id="67105">
    <property type="hits" value="2 hits in 77 CRISPR screens"/>
</dbReference>
<dbReference type="PRO" id="PR:Q8CCM6"/>
<dbReference type="Proteomes" id="UP000000589">
    <property type="component" value="Chromosome 18"/>
</dbReference>
<dbReference type="RNAct" id="Q8CCM6">
    <property type="molecule type" value="protein"/>
</dbReference>
<dbReference type="Bgee" id="ENSMUSG00000024645">
    <property type="expression patterns" value="Expressed in epiblast (generic) and 67 other cell types or tissues"/>
</dbReference>
<dbReference type="GO" id="GO:0005739">
    <property type="term" value="C:mitochondrion"/>
    <property type="evidence" value="ECO:0007005"/>
    <property type="project" value="MGI"/>
</dbReference>
<dbReference type="GO" id="GO:0005744">
    <property type="term" value="C:TIM23 mitochondrial import inner membrane translocase complex"/>
    <property type="evidence" value="ECO:0000250"/>
    <property type="project" value="UniProtKB"/>
</dbReference>
<dbReference type="GO" id="GO:0033617">
    <property type="term" value="P:mitochondrial cytochrome c oxidase assembly"/>
    <property type="evidence" value="ECO:0000250"/>
    <property type="project" value="UniProtKB"/>
</dbReference>
<dbReference type="GO" id="GO:0032981">
    <property type="term" value="P:mitochondrial respiratory chain complex I assembly"/>
    <property type="evidence" value="ECO:0000250"/>
    <property type="project" value="UniProtKB"/>
</dbReference>
<dbReference type="GO" id="GO:0030150">
    <property type="term" value="P:protein import into mitochondrial matrix"/>
    <property type="evidence" value="ECO:0000250"/>
    <property type="project" value="UniProtKB"/>
</dbReference>
<dbReference type="FunFam" id="3.10.450.320:FF:000001">
    <property type="entry name" value="Mitochondrial import inner membrane translocase subunit Tim21"/>
    <property type="match status" value="1"/>
</dbReference>
<dbReference type="Gene3D" id="3.10.450.320">
    <property type="entry name" value="Mitochondrial import inner membrane translocase subunit Tim21"/>
    <property type="match status" value="1"/>
</dbReference>
<dbReference type="InterPro" id="IPR013261">
    <property type="entry name" value="Tim21"/>
</dbReference>
<dbReference type="InterPro" id="IPR038552">
    <property type="entry name" value="Tim21_IMS_sf"/>
</dbReference>
<dbReference type="PANTHER" id="PTHR13032">
    <property type="entry name" value="MITOCHONDRIAL IMPORT INNER MEMBRANE TRANSLOCASE SUBUNIT TIM21"/>
    <property type="match status" value="1"/>
</dbReference>
<dbReference type="PANTHER" id="PTHR13032:SF6">
    <property type="entry name" value="MITOCHONDRIAL IMPORT INNER MEMBRANE TRANSLOCASE SUBUNIT TIM21"/>
    <property type="match status" value="1"/>
</dbReference>
<dbReference type="Pfam" id="PF08294">
    <property type="entry name" value="TIM21"/>
    <property type="match status" value="1"/>
</dbReference>
<name>TIM21_MOUSE</name>
<organism>
    <name type="scientific">Mus musculus</name>
    <name type="common">Mouse</name>
    <dbReference type="NCBI Taxonomy" id="10090"/>
    <lineage>
        <taxon>Eukaryota</taxon>
        <taxon>Metazoa</taxon>
        <taxon>Chordata</taxon>
        <taxon>Craniata</taxon>
        <taxon>Vertebrata</taxon>
        <taxon>Euteleostomi</taxon>
        <taxon>Mammalia</taxon>
        <taxon>Eutheria</taxon>
        <taxon>Euarchontoglires</taxon>
        <taxon>Glires</taxon>
        <taxon>Rodentia</taxon>
        <taxon>Myomorpha</taxon>
        <taxon>Muroidea</taxon>
        <taxon>Muridae</taxon>
        <taxon>Murinae</taxon>
        <taxon>Mus</taxon>
        <taxon>Mus</taxon>
    </lineage>
</organism>
<gene>
    <name type="primary">Timm21</name>
    <name type="synonym">Tim21</name>
</gene>
<evidence type="ECO:0000250" key="1">
    <source>
        <dbReference type="UniProtKB" id="Q9BVV7"/>
    </source>
</evidence>
<evidence type="ECO:0000255" key="2"/>
<evidence type="ECO:0000256" key="3">
    <source>
        <dbReference type="SAM" id="MobiDB-lite"/>
    </source>
</evidence>
<evidence type="ECO:0000305" key="4"/>
<keyword id="KW-0025">Alternative splicing</keyword>
<keyword id="KW-0472">Membrane</keyword>
<keyword id="KW-0496">Mitochondrion</keyword>
<keyword id="KW-0653">Protein transport</keyword>
<keyword id="KW-1185">Reference proteome</keyword>
<keyword id="KW-0809">Transit peptide</keyword>
<keyword id="KW-0811">Translocation</keyword>
<keyword id="KW-0812">Transmembrane</keyword>
<keyword id="KW-1133">Transmembrane helix</keyword>
<keyword id="KW-0813">Transport</keyword>
<reference key="1">
    <citation type="journal article" date="2005" name="Science">
        <title>The transcriptional landscape of the mammalian genome.</title>
        <authorList>
            <person name="Carninci P."/>
            <person name="Kasukawa T."/>
            <person name="Katayama S."/>
            <person name="Gough J."/>
            <person name="Frith M.C."/>
            <person name="Maeda N."/>
            <person name="Oyama R."/>
            <person name="Ravasi T."/>
            <person name="Lenhard B."/>
            <person name="Wells C."/>
            <person name="Kodzius R."/>
            <person name="Shimokawa K."/>
            <person name="Bajic V.B."/>
            <person name="Brenner S.E."/>
            <person name="Batalov S."/>
            <person name="Forrest A.R."/>
            <person name="Zavolan M."/>
            <person name="Davis M.J."/>
            <person name="Wilming L.G."/>
            <person name="Aidinis V."/>
            <person name="Allen J.E."/>
            <person name="Ambesi-Impiombato A."/>
            <person name="Apweiler R."/>
            <person name="Aturaliya R.N."/>
            <person name="Bailey T.L."/>
            <person name="Bansal M."/>
            <person name="Baxter L."/>
            <person name="Beisel K.W."/>
            <person name="Bersano T."/>
            <person name="Bono H."/>
            <person name="Chalk A.M."/>
            <person name="Chiu K.P."/>
            <person name="Choudhary V."/>
            <person name="Christoffels A."/>
            <person name="Clutterbuck D.R."/>
            <person name="Crowe M.L."/>
            <person name="Dalla E."/>
            <person name="Dalrymple B.P."/>
            <person name="de Bono B."/>
            <person name="Della Gatta G."/>
            <person name="di Bernardo D."/>
            <person name="Down T."/>
            <person name="Engstrom P."/>
            <person name="Fagiolini M."/>
            <person name="Faulkner G."/>
            <person name="Fletcher C.F."/>
            <person name="Fukushima T."/>
            <person name="Furuno M."/>
            <person name="Futaki S."/>
            <person name="Gariboldi M."/>
            <person name="Georgii-Hemming P."/>
            <person name="Gingeras T.R."/>
            <person name="Gojobori T."/>
            <person name="Green R.E."/>
            <person name="Gustincich S."/>
            <person name="Harbers M."/>
            <person name="Hayashi Y."/>
            <person name="Hensch T.K."/>
            <person name="Hirokawa N."/>
            <person name="Hill D."/>
            <person name="Huminiecki L."/>
            <person name="Iacono M."/>
            <person name="Ikeo K."/>
            <person name="Iwama A."/>
            <person name="Ishikawa T."/>
            <person name="Jakt M."/>
            <person name="Kanapin A."/>
            <person name="Katoh M."/>
            <person name="Kawasawa Y."/>
            <person name="Kelso J."/>
            <person name="Kitamura H."/>
            <person name="Kitano H."/>
            <person name="Kollias G."/>
            <person name="Krishnan S.P."/>
            <person name="Kruger A."/>
            <person name="Kummerfeld S.K."/>
            <person name="Kurochkin I.V."/>
            <person name="Lareau L.F."/>
            <person name="Lazarevic D."/>
            <person name="Lipovich L."/>
            <person name="Liu J."/>
            <person name="Liuni S."/>
            <person name="McWilliam S."/>
            <person name="Madan Babu M."/>
            <person name="Madera M."/>
            <person name="Marchionni L."/>
            <person name="Matsuda H."/>
            <person name="Matsuzawa S."/>
            <person name="Miki H."/>
            <person name="Mignone F."/>
            <person name="Miyake S."/>
            <person name="Morris K."/>
            <person name="Mottagui-Tabar S."/>
            <person name="Mulder N."/>
            <person name="Nakano N."/>
            <person name="Nakauchi H."/>
            <person name="Ng P."/>
            <person name="Nilsson R."/>
            <person name="Nishiguchi S."/>
            <person name="Nishikawa S."/>
            <person name="Nori F."/>
            <person name="Ohara O."/>
            <person name="Okazaki Y."/>
            <person name="Orlando V."/>
            <person name="Pang K.C."/>
            <person name="Pavan W.J."/>
            <person name="Pavesi G."/>
            <person name="Pesole G."/>
            <person name="Petrovsky N."/>
            <person name="Piazza S."/>
            <person name="Reed J."/>
            <person name="Reid J.F."/>
            <person name="Ring B.Z."/>
            <person name="Ringwald M."/>
            <person name="Rost B."/>
            <person name="Ruan Y."/>
            <person name="Salzberg S.L."/>
            <person name="Sandelin A."/>
            <person name="Schneider C."/>
            <person name="Schoenbach C."/>
            <person name="Sekiguchi K."/>
            <person name="Semple C.A."/>
            <person name="Seno S."/>
            <person name="Sessa L."/>
            <person name="Sheng Y."/>
            <person name="Shibata Y."/>
            <person name="Shimada H."/>
            <person name="Shimada K."/>
            <person name="Silva D."/>
            <person name="Sinclair B."/>
            <person name="Sperling S."/>
            <person name="Stupka E."/>
            <person name="Sugiura K."/>
            <person name="Sultana R."/>
            <person name="Takenaka Y."/>
            <person name="Taki K."/>
            <person name="Tammoja K."/>
            <person name="Tan S.L."/>
            <person name="Tang S."/>
            <person name="Taylor M.S."/>
            <person name="Tegner J."/>
            <person name="Teichmann S.A."/>
            <person name="Ueda H.R."/>
            <person name="van Nimwegen E."/>
            <person name="Verardo R."/>
            <person name="Wei C.L."/>
            <person name="Yagi K."/>
            <person name="Yamanishi H."/>
            <person name="Zabarovsky E."/>
            <person name="Zhu S."/>
            <person name="Zimmer A."/>
            <person name="Hide W."/>
            <person name="Bult C."/>
            <person name="Grimmond S.M."/>
            <person name="Teasdale R.D."/>
            <person name="Liu E.T."/>
            <person name="Brusic V."/>
            <person name="Quackenbush J."/>
            <person name="Wahlestedt C."/>
            <person name="Mattick J.S."/>
            <person name="Hume D.A."/>
            <person name="Kai C."/>
            <person name="Sasaki D."/>
            <person name="Tomaru Y."/>
            <person name="Fukuda S."/>
            <person name="Kanamori-Katayama M."/>
            <person name="Suzuki M."/>
            <person name="Aoki J."/>
            <person name="Arakawa T."/>
            <person name="Iida J."/>
            <person name="Imamura K."/>
            <person name="Itoh M."/>
            <person name="Kato T."/>
            <person name="Kawaji H."/>
            <person name="Kawagashira N."/>
            <person name="Kawashima T."/>
            <person name="Kojima M."/>
            <person name="Kondo S."/>
            <person name="Konno H."/>
            <person name="Nakano K."/>
            <person name="Ninomiya N."/>
            <person name="Nishio T."/>
            <person name="Okada M."/>
            <person name="Plessy C."/>
            <person name="Shibata K."/>
            <person name="Shiraki T."/>
            <person name="Suzuki S."/>
            <person name="Tagami M."/>
            <person name="Waki K."/>
            <person name="Watahiki A."/>
            <person name="Okamura-Oho Y."/>
            <person name="Suzuki H."/>
            <person name="Kawai J."/>
            <person name="Hayashizaki Y."/>
        </authorList>
    </citation>
    <scope>NUCLEOTIDE SEQUENCE [LARGE SCALE MRNA] (ISOFORMS 1 AND 2)</scope>
    <source>
        <strain>C57BL/6J</strain>
        <tissue>Embryo</tissue>
        <tissue>Olfactory bulb</tissue>
        <tissue>Skin</tissue>
    </source>
</reference>
<reference key="2">
    <citation type="journal article" date="2004" name="Genome Res.">
        <title>The status, quality, and expansion of the NIH full-length cDNA project: the Mammalian Gene Collection (MGC).</title>
        <authorList>
            <consortium name="The MGC Project Team"/>
        </authorList>
    </citation>
    <scope>NUCLEOTIDE SEQUENCE [LARGE SCALE MRNA] (ISOFORM 1)</scope>
    <source>
        <strain>C57BL/6J</strain>
        <tissue>Eye</tissue>
        <tissue>Skin</tissue>
    </source>
</reference>
<reference key="3">
    <citation type="journal article" date="2010" name="Cell">
        <title>A tissue-specific atlas of mouse protein phosphorylation and expression.</title>
        <authorList>
            <person name="Huttlin E.L."/>
            <person name="Jedrychowski M.P."/>
            <person name="Elias J.E."/>
            <person name="Goswami T."/>
            <person name="Rad R."/>
            <person name="Beausoleil S.A."/>
            <person name="Villen J."/>
            <person name="Haas W."/>
            <person name="Sowa M.E."/>
            <person name="Gygi S.P."/>
        </authorList>
    </citation>
    <scope>IDENTIFICATION BY MASS SPECTROMETRY [LARGE SCALE ANALYSIS]</scope>
    <source>
        <tissue>Brown adipose tissue</tissue>
        <tissue>Heart</tissue>
        <tissue>Kidney</tissue>
        <tissue>Liver</tissue>
        <tissue>Spleen</tissue>
        <tissue>Testis</tissue>
    </source>
</reference>
<protein>
    <recommendedName>
        <fullName>Mitochondrial import inner membrane translocase subunit Tim21</fullName>
    </recommendedName>
    <alternativeName>
        <fullName>TIM21-like protein, mitochondrial</fullName>
    </alternativeName>
</protein>
<sequence length="244" mass="27911">MICAFLRVVQHAEKLHGSLGRQLLPHFVFTKACFKTQPLRWGLREQKITVQPRTVLRFTQKTFWTQGPDPRKAKEDSTKQVSIRRNQREETGVSMSQKVREAGRDVSYLIVVLFGVGLTGGLLYAIFKELFFSSSPNIIYGKALGKCRTHPEVIGVFGEPLKGYGEMSRRGRRQHVRFSEYVNNGLKRIRVKFYIEGSEPGKQGTVHAEVEENPGSGQFEFRYIFVEVTPTRSIIVEDNRSEQS</sequence>
<feature type="transit peptide" description="Mitochondrion" evidence="2">
    <location>
        <begin position="1"/>
        <end position="18"/>
    </location>
</feature>
<feature type="chain" id="PRO_0000043229" description="Mitochondrial import inner membrane translocase subunit Tim21">
    <location>
        <begin position="19"/>
        <end position="244"/>
    </location>
</feature>
<feature type="transmembrane region" description="Helical" evidence="2">
    <location>
        <begin position="107"/>
        <end position="127"/>
    </location>
</feature>
<feature type="region of interest" description="Disordered" evidence="3">
    <location>
        <begin position="65"/>
        <end position="96"/>
    </location>
</feature>
<feature type="compositionally biased region" description="Basic and acidic residues" evidence="3">
    <location>
        <begin position="69"/>
        <end position="78"/>
    </location>
</feature>
<feature type="splice variant" id="VSP_060547" description="In isoform 2.">
    <original>GLLYAIFKELF</original>
    <variation>YRPSKHMNAFT</variation>
    <location>
        <begin position="121"/>
        <end position="131"/>
    </location>
</feature>
<feature type="splice variant" id="VSP_060548" description="In isoform 2.">
    <location>
        <begin position="132"/>
        <end position="244"/>
    </location>
</feature>
<feature type="sequence conflict" description="In Ref. 1; BAB28768." evidence="4" ref="1">
    <original>R</original>
    <variation>Q</variation>
    <location>
        <position position="71"/>
    </location>
</feature>